<name>BAMB_VIBCH</name>
<dbReference type="EMBL" id="AE003852">
    <property type="protein sequence ID" value="AAF93927.1"/>
    <property type="molecule type" value="Genomic_DNA"/>
</dbReference>
<dbReference type="PIR" id="A82284">
    <property type="entry name" value="A82284"/>
</dbReference>
<dbReference type="RefSeq" id="NP_230411.1">
    <property type="nucleotide sequence ID" value="NC_002505.1"/>
</dbReference>
<dbReference type="RefSeq" id="WP_000732723.1">
    <property type="nucleotide sequence ID" value="NZ_LT906614.1"/>
</dbReference>
<dbReference type="SMR" id="Q9KTW8"/>
<dbReference type="STRING" id="243277.VC_0762"/>
<dbReference type="DNASU" id="2615305"/>
<dbReference type="EnsemblBacteria" id="AAF93927">
    <property type="protein sequence ID" value="AAF93927"/>
    <property type="gene ID" value="VC_0762"/>
</dbReference>
<dbReference type="KEGG" id="vch:VC_0762"/>
<dbReference type="PATRIC" id="fig|243277.26.peg.726"/>
<dbReference type="eggNOG" id="COG1520">
    <property type="taxonomic scope" value="Bacteria"/>
</dbReference>
<dbReference type="HOGENOM" id="CLU_027480_0_1_6"/>
<dbReference type="Proteomes" id="UP000000584">
    <property type="component" value="Chromosome 1"/>
</dbReference>
<dbReference type="GO" id="GO:0009279">
    <property type="term" value="C:cell outer membrane"/>
    <property type="evidence" value="ECO:0007669"/>
    <property type="project" value="UniProtKB-SubCell"/>
</dbReference>
<dbReference type="GO" id="GO:0043165">
    <property type="term" value="P:Gram-negative-bacterium-type cell outer membrane assembly"/>
    <property type="evidence" value="ECO:0007669"/>
    <property type="project" value="UniProtKB-UniRule"/>
</dbReference>
<dbReference type="GO" id="GO:0051205">
    <property type="term" value="P:protein insertion into membrane"/>
    <property type="evidence" value="ECO:0007669"/>
    <property type="project" value="UniProtKB-UniRule"/>
</dbReference>
<dbReference type="Gene3D" id="2.130.10.10">
    <property type="entry name" value="YVTN repeat-like/Quinoprotein amine dehydrogenase"/>
    <property type="match status" value="1"/>
</dbReference>
<dbReference type="HAMAP" id="MF_00923">
    <property type="entry name" value="OM_assembly_BamB"/>
    <property type="match status" value="1"/>
</dbReference>
<dbReference type="InterPro" id="IPR017687">
    <property type="entry name" value="BamB"/>
</dbReference>
<dbReference type="InterPro" id="IPR018391">
    <property type="entry name" value="PQQ_b-propeller_rpt"/>
</dbReference>
<dbReference type="InterPro" id="IPR002372">
    <property type="entry name" value="PQQ_rpt_dom"/>
</dbReference>
<dbReference type="InterPro" id="IPR011047">
    <property type="entry name" value="Quinoprotein_ADH-like_sf"/>
</dbReference>
<dbReference type="InterPro" id="IPR015943">
    <property type="entry name" value="WD40/YVTN_repeat-like_dom_sf"/>
</dbReference>
<dbReference type="NCBIfam" id="TIGR03300">
    <property type="entry name" value="assembly_YfgL"/>
    <property type="match status" value="1"/>
</dbReference>
<dbReference type="NCBIfam" id="NF008351">
    <property type="entry name" value="PRK11138.1"/>
    <property type="match status" value="1"/>
</dbReference>
<dbReference type="PANTHER" id="PTHR34512">
    <property type="entry name" value="CELL SURFACE PROTEIN"/>
    <property type="match status" value="1"/>
</dbReference>
<dbReference type="PANTHER" id="PTHR34512:SF30">
    <property type="entry name" value="OUTER MEMBRANE PROTEIN ASSEMBLY FACTOR BAMB"/>
    <property type="match status" value="1"/>
</dbReference>
<dbReference type="Pfam" id="PF13360">
    <property type="entry name" value="PQQ_2"/>
    <property type="match status" value="1"/>
</dbReference>
<dbReference type="SMART" id="SM00564">
    <property type="entry name" value="PQQ"/>
    <property type="match status" value="7"/>
</dbReference>
<dbReference type="SUPFAM" id="SSF50998">
    <property type="entry name" value="Quinoprotein alcohol dehydrogenase-like"/>
    <property type="match status" value="1"/>
</dbReference>
<dbReference type="PROSITE" id="PS51257">
    <property type="entry name" value="PROKAR_LIPOPROTEIN"/>
    <property type="match status" value="1"/>
</dbReference>
<accession>Q9KTW8</accession>
<evidence type="ECO:0000255" key="1">
    <source>
        <dbReference type="HAMAP-Rule" id="MF_00923"/>
    </source>
</evidence>
<organism>
    <name type="scientific">Vibrio cholerae serotype O1 (strain ATCC 39315 / El Tor Inaba N16961)</name>
    <dbReference type="NCBI Taxonomy" id="243277"/>
    <lineage>
        <taxon>Bacteria</taxon>
        <taxon>Pseudomonadati</taxon>
        <taxon>Pseudomonadota</taxon>
        <taxon>Gammaproteobacteria</taxon>
        <taxon>Vibrionales</taxon>
        <taxon>Vibrionaceae</taxon>
        <taxon>Vibrio</taxon>
    </lineage>
</organism>
<gene>
    <name evidence="1" type="primary">bamB</name>
    <name type="ordered locus">VC_0762</name>
</gene>
<protein>
    <recommendedName>
        <fullName evidence="1">Outer membrane protein assembly factor BamB</fullName>
    </recommendedName>
</protein>
<feature type="signal peptide" evidence="1">
    <location>
        <begin position="1"/>
        <end position="20"/>
    </location>
</feature>
<feature type="chain" id="PRO_0000417691" description="Outer membrane protein assembly factor BamB">
    <location>
        <begin position="21"/>
        <end position="386"/>
    </location>
</feature>
<feature type="lipid moiety-binding region" description="N-palmitoyl cysteine" evidence="1">
    <location>
        <position position="21"/>
    </location>
</feature>
<feature type="lipid moiety-binding region" description="S-diacylglycerol cysteine" evidence="1">
    <location>
        <position position="21"/>
    </location>
</feature>
<reference key="1">
    <citation type="journal article" date="2000" name="Nature">
        <title>DNA sequence of both chromosomes of the cholera pathogen Vibrio cholerae.</title>
        <authorList>
            <person name="Heidelberg J.F."/>
            <person name="Eisen J.A."/>
            <person name="Nelson W.C."/>
            <person name="Clayton R.A."/>
            <person name="Gwinn M.L."/>
            <person name="Dodson R.J."/>
            <person name="Haft D.H."/>
            <person name="Hickey E.K."/>
            <person name="Peterson J.D."/>
            <person name="Umayam L.A."/>
            <person name="Gill S.R."/>
            <person name="Nelson K.E."/>
            <person name="Read T.D."/>
            <person name="Tettelin H."/>
            <person name="Richardson D.L."/>
            <person name="Ermolaeva M.D."/>
            <person name="Vamathevan J.J."/>
            <person name="Bass S."/>
            <person name="Qin H."/>
            <person name="Dragoi I."/>
            <person name="Sellers P."/>
            <person name="McDonald L.A."/>
            <person name="Utterback T.R."/>
            <person name="Fleischmann R.D."/>
            <person name="Nierman W.C."/>
            <person name="White O."/>
            <person name="Salzberg S.L."/>
            <person name="Smith H.O."/>
            <person name="Colwell R.R."/>
            <person name="Mekalanos J.J."/>
            <person name="Venter J.C."/>
            <person name="Fraser C.M."/>
        </authorList>
    </citation>
    <scope>NUCLEOTIDE SEQUENCE [LARGE SCALE GENOMIC DNA]</scope>
    <source>
        <strain>ATCC 39315 / El Tor Inaba N16961</strain>
    </source>
</reference>
<sequence length="386" mass="41202">MKKLFNQVLVAAGVLALLAGCASEEENVIMAPLPIVKSEFTPKTLWSASVGDGVGHYFSKLAPDYAYDKVFVASRDGVVKALDPQNGKVIWTTDLEIEGSARLSGGITAAFGKLFIGSENGVVNALDAETGEPLWASAIEGEVLAAPAADNNIVIVNTSRGALIALNQEDGAQKWTISTEVPNLTLRGDSRPTAVAGGVFWGTPSGRLAAAIAERGQLIWQQPVGQPKGATEIDRLVDVDASPLVIGGTLFTVGFNGQLIAIDLRSGQPIWKRNYSSATDMATDGSRLYLVTDKDHLVAVDTRSGTELWSNTQLEHRLLTAPKMIDDYLVVGDAEGYLHWIDRNSGEFIAQQLVNDSGFAVGPLALNDGYVIVTRNGQIKKLTIQQ</sequence>
<comment type="function">
    <text evidence="1">Part of the outer membrane protein assembly complex, which is involved in assembly and insertion of beta-barrel proteins into the outer membrane.</text>
</comment>
<comment type="subunit">
    <text evidence="1">Part of the Bam complex.</text>
</comment>
<comment type="subcellular location">
    <subcellularLocation>
        <location evidence="1">Cell outer membrane</location>
        <topology evidence="1">Lipid-anchor</topology>
    </subcellularLocation>
</comment>
<comment type="similarity">
    <text evidence="1">Belongs to the BamB family.</text>
</comment>
<proteinExistence type="inferred from homology"/>
<keyword id="KW-0998">Cell outer membrane</keyword>
<keyword id="KW-0449">Lipoprotein</keyword>
<keyword id="KW-0472">Membrane</keyword>
<keyword id="KW-0564">Palmitate</keyword>
<keyword id="KW-1185">Reference proteome</keyword>
<keyword id="KW-0732">Signal</keyword>